<reference key="1">
    <citation type="journal article" date="1989" name="J. Mol. Biol.">
        <title>Sequence, organization, transcription and evolution of RNA polymerase subunit genes from the archaebacterial extreme halophiles Halobacterium halobium and Halococcus morrhuae.</title>
        <authorList>
            <person name="Leffers H."/>
            <person name="Gropp F."/>
            <person name="Lottspeich F."/>
            <person name="Zillig W."/>
            <person name="Garrett R.A."/>
        </authorList>
    </citation>
    <scope>NUCLEOTIDE SEQUENCE [GENOMIC DNA]</scope>
    <source>
        <strain>ATCC 17082 / DSM 1307 / JCM 8876 / NBRC 14719 / NCIMB 787</strain>
    </source>
</reference>
<proteinExistence type="inferred from homology"/>
<accession>P15353</accession>
<sequence length="393" mass="42993">MTEITNAIERTVEGTDLPKRLKDEVYESIEGRDVTDEQAVSIAEAVESRYLDTRVEPLDPVGTVSAQSIGEPGTQMTMNTFHYAGVAEIDVTQGLPRLIELVDARKTPDTPMMTVYLDDQHAENREKAHEVVWNIESTRILALGDVSTNVADMLVQVNLNEQTLDERMISAETVAEIIEDSLGVEVTQTGTTIEFGPAEPSYRRLLQLVEELREIVFKGIEEVSRVVIRKEDVDDGEEFILYTEGSAFGDVLDIEGVDASRTTCNNIHEVYRNLGVEAARETIIDETMNTLEEQGLGDVNIRHLMLVADIMTAEGTIESIGRHGISGNKNSVLARAAFEVTVNHLLDAAVHGEVDDLDGVTENVIVGKPIKLGTGDVNLRMGGATTDGSGRAD</sequence>
<protein>
    <recommendedName>
        <fullName evidence="1">DNA-directed RNA polymerase subunit Rpo1C</fullName>
        <ecNumber evidence="1">2.7.7.6</ecNumber>
    </recommendedName>
    <alternativeName>
        <fullName evidence="1">DNA-directed RNA polymerase subunit A''</fullName>
    </alternativeName>
</protein>
<feature type="chain" id="PRO_0000074014" description="DNA-directed RNA polymerase subunit Rpo1C">
    <location>
        <begin position="1"/>
        <end position="393"/>
    </location>
</feature>
<organism>
    <name type="scientific">Halococcus morrhuae</name>
    <name type="common">Micrococcus morrhuae</name>
    <dbReference type="NCBI Taxonomy" id="2250"/>
    <lineage>
        <taxon>Archaea</taxon>
        <taxon>Methanobacteriati</taxon>
        <taxon>Methanobacteriota</taxon>
        <taxon>Stenosarchaea group</taxon>
        <taxon>Halobacteria</taxon>
        <taxon>Halobacteriales</taxon>
        <taxon>Halococcaceae</taxon>
        <taxon>Halococcus</taxon>
    </lineage>
</organism>
<comment type="function">
    <text evidence="1">DNA-dependent RNA polymerase (RNAP) catalyzes the transcription of DNA into RNA using the four ribonucleoside triphosphates as substrates. Forms part of the jaw domain.</text>
</comment>
<comment type="catalytic activity">
    <reaction evidence="1">
        <text>RNA(n) + a ribonucleoside 5'-triphosphate = RNA(n+1) + diphosphate</text>
        <dbReference type="Rhea" id="RHEA:21248"/>
        <dbReference type="Rhea" id="RHEA-COMP:14527"/>
        <dbReference type="Rhea" id="RHEA-COMP:17342"/>
        <dbReference type="ChEBI" id="CHEBI:33019"/>
        <dbReference type="ChEBI" id="CHEBI:61557"/>
        <dbReference type="ChEBI" id="CHEBI:140395"/>
        <dbReference type="EC" id="2.7.7.6"/>
    </reaction>
</comment>
<comment type="subunit">
    <text evidence="1">Part of the RNA polymerase complex.</text>
</comment>
<comment type="subcellular location">
    <subcellularLocation>
        <location evidence="1">Cytoplasm</location>
    </subcellularLocation>
</comment>
<comment type="similarity">
    <text evidence="1">Belongs to the RNA polymerase beta' chain family.</text>
</comment>
<name>RPO1C_HALMO</name>
<evidence type="ECO:0000255" key="1">
    <source>
        <dbReference type="HAMAP-Rule" id="MF_00411"/>
    </source>
</evidence>
<keyword id="KW-0963">Cytoplasm</keyword>
<keyword id="KW-0238">DNA-binding</keyword>
<keyword id="KW-0240">DNA-directed RNA polymerase</keyword>
<keyword id="KW-0548">Nucleotidyltransferase</keyword>
<keyword id="KW-0804">Transcription</keyword>
<keyword id="KW-0808">Transferase</keyword>
<dbReference type="EC" id="2.7.7.6" evidence="1"/>
<dbReference type="EMBL" id="X57145">
    <property type="protein sequence ID" value="CAA40432.1"/>
    <property type="molecule type" value="Genomic_DNA"/>
</dbReference>
<dbReference type="PIR" id="S03576">
    <property type="entry name" value="S03576"/>
</dbReference>
<dbReference type="SMR" id="P15353"/>
<dbReference type="GO" id="GO:0005737">
    <property type="term" value="C:cytoplasm"/>
    <property type="evidence" value="ECO:0007669"/>
    <property type="project" value="UniProtKB-SubCell"/>
</dbReference>
<dbReference type="GO" id="GO:0000428">
    <property type="term" value="C:DNA-directed RNA polymerase complex"/>
    <property type="evidence" value="ECO:0007669"/>
    <property type="project" value="UniProtKB-KW"/>
</dbReference>
<dbReference type="GO" id="GO:0003677">
    <property type="term" value="F:DNA binding"/>
    <property type="evidence" value="ECO:0007669"/>
    <property type="project" value="UniProtKB-UniRule"/>
</dbReference>
<dbReference type="GO" id="GO:0003899">
    <property type="term" value="F:DNA-directed RNA polymerase activity"/>
    <property type="evidence" value="ECO:0007669"/>
    <property type="project" value="UniProtKB-UniRule"/>
</dbReference>
<dbReference type="GO" id="GO:0006351">
    <property type="term" value="P:DNA-templated transcription"/>
    <property type="evidence" value="ECO:0007669"/>
    <property type="project" value="UniProtKB-UniRule"/>
</dbReference>
<dbReference type="CDD" id="cd06528">
    <property type="entry name" value="RNAP_A"/>
    <property type="match status" value="1"/>
</dbReference>
<dbReference type="Gene3D" id="1.10.150.390">
    <property type="match status" value="1"/>
</dbReference>
<dbReference type="HAMAP" id="MF_00411">
    <property type="entry name" value="RNApol_arch_Rpo1C"/>
    <property type="match status" value="1"/>
</dbReference>
<dbReference type="InterPro" id="IPR045867">
    <property type="entry name" value="DNA-dir_RpoC_beta_prime"/>
</dbReference>
<dbReference type="InterPro" id="IPR007081">
    <property type="entry name" value="RNA_pol_Rpb1_5"/>
</dbReference>
<dbReference type="InterPro" id="IPR012757">
    <property type="entry name" value="RPO1C"/>
</dbReference>
<dbReference type="NCBIfam" id="TIGR02389">
    <property type="entry name" value="RNA_pol_rpoA2"/>
    <property type="match status" value="1"/>
</dbReference>
<dbReference type="PANTHER" id="PTHR19376">
    <property type="entry name" value="DNA-DIRECTED RNA POLYMERASE"/>
    <property type="match status" value="1"/>
</dbReference>
<dbReference type="PANTHER" id="PTHR19376:SF32">
    <property type="entry name" value="DNA-DIRECTED RNA POLYMERASE III SUBUNIT RPC1"/>
    <property type="match status" value="1"/>
</dbReference>
<dbReference type="Pfam" id="PF04998">
    <property type="entry name" value="RNA_pol_Rpb1_5"/>
    <property type="match status" value="1"/>
</dbReference>
<dbReference type="SUPFAM" id="SSF64484">
    <property type="entry name" value="beta and beta-prime subunits of DNA dependent RNA-polymerase"/>
    <property type="match status" value="1"/>
</dbReference>
<gene>
    <name evidence="1" type="primary">rpo1C</name>
    <name evidence="1" type="synonym">rpoA2</name>
</gene>